<name>DEN1A_HUMAN</name>
<reference key="1">
    <citation type="journal article" date="2004" name="Nat. Genet.">
        <title>Complete sequencing and characterization of 21,243 full-length human cDNAs.</title>
        <authorList>
            <person name="Ota T."/>
            <person name="Suzuki Y."/>
            <person name="Nishikawa T."/>
            <person name="Otsuki T."/>
            <person name="Sugiyama T."/>
            <person name="Irie R."/>
            <person name="Wakamatsu A."/>
            <person name="Hayashi K."/>
            <person name="Sato H."/>
            <person name="Nagai K."/>
            <person name="Kimura K."/>
            <person name="Makita H."/>
            <person name="Sekine M."/>
            <person name="Obayashi M."/>
            <person name="Nishi T."/>
            <person name="Shibahara T."/>
            <person name="Tanaka T."/>
            <person name="Ishii S."/>
            <person name="Yamamoto J."/>
            <person name="Saito K."/>
            <person name="Kawai Y."/>
            <person name="Isono Y."/>
            <person name="Nakamura Y."/>
            <person name="Nagahari K."/>
            <person name="Murakami K."/>
            <person name="Yasuda T."/>
            <person name="Iwayanagi T."/>
            <person name="Wagatsuma M."/>
            <person name="Shiratori A."/>
            <person name="Sudo H."/>
            <person name="Hosoiri T."/>
            <person name="Kaku Y."/>
            <person name="Kodaira H."/>
            <person name="Kondo H."/>
            <person name="Sugawara M."/>
            <person name="Takahashi M."/>
            <person name="Kanda K."/>
            <person name="Yokoi T."/>
            <person name="Furuya T."/>
            <person name="Kikkawa E."/>
            <person name="Omura Y."/>
            <person name="Abe K."/>
            <person name="Kamihara K."/>
            <person name="Katsuta N."/>
            <person name="Sato K."/>
            <person name="Tanikawa M."/>
            <person name="Yamazaki M."/>
            <person name="Ninomiya K."/>
            <person name="Ishibashi T."/>
            <person name="Yamashita H."/>
            <person name="Murakawa K."/>
            <person name="Fujimori K."/>
            <person name="Tanai H."/>
            <person name="Kimata M."/>
            <person name="Watanabe M."/>
            <person name="Hiraoka S."/>
            <person name="Chiba Y."/>
            <person name="Ishida S."/>
            <person name="Ono Y."/>
            <person name="Takiguchi S."/>
            <person name="Watanabe S."/>
            <person name="Yosida M."/>
            <person name="Hotuta T."/>
            <person name="Kusano J."/>
            <person name="Kanehori K."/>
            <person name="Takahashi-Fujii A."/>
            <person name="Hara H."/>
            <person name="Tanase T.-O."/>
            <person name="Nomura Y."/>
            <person name="Togiya S."/>
            <person name="Komai F."/>
            <person name="Hara R."/>
            <person name="Takeuchi K."/>
            <person name="Arita M."/>
            <person name="Imose N."/>
            <person name="Musashino K."/>
            <person name="Yuuki H."/>
            <person name="Oshima A."/>
            <person name="Sasaki N."/>
            <person name="Aotsuka S."/>
            <person name="Yoshikawa Y."/>
            <person name="Matsunawa H."/>
            <person name="Ichihara T."/>
            <person name="Shiohata N."/>
            <person name="Sano S."/>
            <person name="Moriya S."/>
            <person name="Momiyama H."/>
            <person name="Satoh N."/>
            <person name="Takami S."/>
            <person name="Terashima Y."/>
            <person name="Suzuki O."/>
            <person name="Nakagawa S."/>
            <person name="Senoh A."/>
            <person name="Mizoguchi H."/>
            <person name="Goto Y."/>
            <person name="Shimizu F."/>
            <person name="Wakebe H."/>
            <person name="Hishigaki H."/>
            <person name="Watanabe T."/>
            <person name="Sugiyama A."/>
            <person name="Takemoto M."/>
            <person name="Kawakami B."/>
            <person name="Yamazaki M."/>
            <person name="Watanabe K."/>
            <person name="Kumagai A."/>
            <person name="Itakura S."/>
            <person name="Fukuzumi Y."/>
            <person name="Fujimori Y."/>
            <person name="Komiyama M."/>
            <person name="Tashiro H."/>
            <person name="Tanigami A."/>
            <person name="Fujiwara T."/>
            <person name="Ono T."/>
            <person name="Yamada K."/>
            <person name="Fujii Y."/>
            <person name="Ozaki K."/>
            <person name="Hirao M."/>
            <person name="Ohmori Y."/>
            <person name="Kawabata A."/>
            <person name="Hikiji T."/>
            <person name="Kobatake N."/>
            <person name="Inagaki H."/>
            <person name="Ikema Y."/>
            <person name="Okamoto S."/>
            <person name="Okitani R."/>
            <person name="Kawakami T."/>
            <person name="Noguchi S."/>
            <person name="Itoh T."/>
            <person name="Shigeta K."/>
            <person name="Senba T."/>
            <person name="Matsumura K."/>
            <person name="Nakajima Y."/>
            <person name="Mizuno T."/>
            <person name="Morinaga M."/>
            <person name="Sasaki M."/>
            <person name="Togashi T."/>
            <person name="Oyama M."/>
            <person name="Hata H."/>
            <person name="Watanabe M."/>
            <person name="Komatsu T."/>
            <person name="Mizushima-Sugano J."/>
            <person name="Satoh T."/>
            <person name="Shirai Y."/>
            <person name="Takahashi Y."/>
            <person name="Nakagawa K."/>
            <person name="Okumura K."/>
            <person name="Nagase T."/>
            <person name="Nomura N."/>
            <person name="Kikuchi H."/>
            <person name="Masuho Y."/>
            <person name="Yamashita R."/>
            <person name="Nakai K."/>
            <person name="Yada T."/>
            <person name="Nakamura Y."/>
            <person name="Ohara O."/>
            <person name="Isogai T."/>
            <person name="Sugano S."/>
        </authorList>
    </citation>
    <scope>NUCLEOTIDE SEQUENCE [LARGE SCALE MRNA] (ISOFORMS 2 AND 6)</scope>
    <scope>NUCLEOTIDE SEQUENCE [LARGE SCALE MRNA] OF 114-1009 (ISOFORM 1)</scope>
    <scope>NUCLEOTIDE SEQUENCE [LARGE SCALE MRNA] OF 217-1009 (ISOFORM 7)</scope>
    <source>
        <tissue>Artery smooth muscle</tissue>
        <tissue>Fetal brain</tissue>
        <tissue>Hippocampus</tissue>
        <tissue>Spleen</tissue>
    </source>
</reference>
<reference key="2">
    <citation type="journal article" date="2004" name="Nature">
        <title>DNA sequence and analysis of human chromosome 9.</title>
        <authorList>
            <person name="Humphray S.J."/>
            <person name="Oliver K."/>
            <person name="Hunt A.R."/>
            <person name="Plumb R.W."/>
            <person name="Loveland J.E."/>
            <person name="Howe K.L."/>
            <person name="Andrews T.D."/>
            <person name="Searle S."/>
            <person name="Hunt S.E."/>
            <person name="Scott C.E."/>
            <person name="Jones M.C."/>
            <person name="Ainscough R."/>
            <person name="Almeida J.P."/>
            <person name="Ambrose K.D."/>
            <person name="Ashwell R.I.S."/>
            <person name="Babbage A.K."/>
            <person name="Babbage S."/>
            <person name="Bagguley C.L."/>
            <person name="Bailey J."/>
            <person name="Banerjee R."/>
            <person name="Barker D.J."/>
            <person name="Barlow K.F."/>
            <person name="Bates K."/>
            <person name="Beasley H."/>
            <person name="Beasley O."/>
            <person name="Bird C.P."/>
            <person name="Bray-Allen S."/>
            <person name="Brown A.J."/>
            <person name="Brown J.Y."/>
            <person name="Burford D."/>
            <person name="Burrill W."/>
            <person name="Burton J."/>
            <person name="Carder C."/>
            <person name="Carter N.P."/>
            <person name="Chapman J.C."/>
            <person name="Chen Y."/>
            <person name="Clarke G."/>
            <person name="Clark S.Y."/>
            <person name="Clee C.M."/>
            <person name="Clegg S."/>
            <person name="Collier R.E."/>
            <person name="Corby N."/>
            <person name="Crosier M."/>
            <person name="Cummings A.T."/>
            <person name="Davies J."/>
            <person name="Dhami P."/>
            <person name="Dunn M."/>
            <person name="Dutta I."/>
            <person name="Dyer L.W."/>
            <person name="Earthrowl M.E."/>
            <person name="Faulkner L."/>
            <person name="Fleming C.J."/>
            <person name="Frankish A."/>
            <person name="Frankland J.A."/>
            <person name="French L."/>
            <person name="Fricker D.G."/>
            <person name="Garner P."/>
            <person name="Garnett J."/>
            <person name="Ghori J."/>
            <person name="Gilbert J.G.R."/>
            <person name="Glison C."/>
            <person name="Grafham D.V."/>
            <person name="Gribble S."/>
            <person name="Griffiths C."/>
            <person name="Griffiths-Jones S."/>
            <person name="Grocock R."/>
            <person name="Guy J."/>
            <person name="Hall R.E."/>
            <person name="Hammond S."/>
            <person name="Harley J.L."/>
            <person name="Harrison E.S.I."/>
            <person name="Hart E.A."/>
            <person name="Heath P.D."/>
            <person name="Henderson C.D."/>
            <person name="Hopkins B.L."/>
            <person name="Howard P.J."/>
            <person name="Howden P.J."/>
            <person name="Huckle E."/>
            <person name="Johnson C."/>
            <person name="Johnson D."/>
            <person name="Joy A.A."/>
            <person name="Kay M."/>
            <person name="Keenan S."/>
            <person name="Kershaw J.K."/>
            <person name="Kimberley A.M."/>
            <person name="King A."/>
            <person name="Knights A."/>
            <person name="Laird G.K."/>
            <person name="Langford C."/>
            <person name="Lawlor S."/>
            <person name="Leongamornlert D.A."/>
            <person name="Leversha M."/>
            <person name="Lloyd C."/>
            <person name="Lloyd D.M."/>
            <person name="Lovell J."/>
            <person name="Martin S."/>
            <person name="Mashreghi-Mohammadi M."/>
            <person name="Matthews L."/>
            <person name="McLaren S."/>
            <person name="McLay K.E."/>
            <person name="McMurray A."/>
            <person name="Milne S."/>
            <person name="Nickerson T."/>
            <person name="Nisbett J."/>
            <person name="Nordsiek G."/>
            <person name="Pearce A.V."/>
            <person name="Peck A.I."/>
            <person name="Porter K.M."/>
            <person name="Pandian R."/>
            <person name="Pelan S."/>
            <person name="Phillimore B."/>
            <person name="Povey S."/>
            <person name="Ramsey Y."/>
            <person name="Rand V."/>
            <person name="Scharfe M."/>
            <person name="Sehra H.K."/>
            <person name="Shownkeen R."/>
            <person name="Sims S.K."/>
            <person name="Skuce C.D."/>
            <person name="Smith M."/>
            <person name="Steward C.A."/>
            <person name="Swarbreck D."/>
            <person name="Sycamore N."/>
            <person name="Tester J."/>
            <person name="Thorpe A."/>
            <person name="Tracey A."/>
            <person name="Tromans A."/>
            <person name="Thomas D.W."/>
            <person name="Wall M."/>
            <person name="Wallis J.M."/>
            <person name="West A.P."/>
            <person name="Whitehead S.L."/>
            <person name="Willey D.L."/>
            <person name="Williams S.A."/>
            <person name="Wilming L."/>
            <person name="Wray P.W."/>
            <person name="Young L."/>
            <person name="Ashurst J.L."/>
            <person name="Coulson A."/>
            <person name="Blocker H."/>
            <person name="Durbin R.M."/>
            <person name="Sulston J.E."/>
            <person name="Hubbard T."/>
            <person name="Jackson M.J."/>
            <person name="Bentley D.R."/>
            <person name="Beck S."/>
            <person name="Rogers J."/>
            <person name="Dunham I."/>
        </authorList>
    </citation>
    <scope>NUCLEOTIDE SEQUENCE [LARGE SCALE GENOMIC DNA]</scope>
</reference>
<reference key="3">
    <citation type="submission" date="2005-07" db="EMBL/GenBank/DDBJ databases">
        <authorList>
            <person name="Mural R.J."/>
            <person name="Istrail S."/>
            <person name="Sutton G.G."/>
            <person name="Florea L."/>
            <person name="Halpern A.L."/>
            <person name="Mobarry C.M."/>
            <person name="Lippert R."/>
            <person name="Walenz B."/>
            <person name="Shatkay H."/>
            <person name="Dew I."/>
            <person name="Miller J.R."/>
            <person name="Flanigan M.J."/>
            <person name="Edwards N.J."/>
            <person name="Bolanos R."/>
            <person name="Fasulo D."/>
            <person name="Halldorsson B.V."/>
            <person name="Hannenhalli S."/>
            <person name="Turner R."/>
            <person name="Yooseph S."/>
            <person name="Lu F."/>
            <person name="Nusskern D.R."/>
            <person name="Shue B.C."/>
            <person name="Zheng X.H."/>
            <person name="Zhong F."/>
            <person name="Delcher A.L."/>
            <person name="Huson D.H."/>
            <person name="Kravitz S.A."/>
            <person name="Mouchard L."/>
            <person name="Reinert K."/>
            <person name="Remington K.A."/>
            <person name="Clark A.G."/>
            <person name="Waterman M.S."/>
            <person name="Eichler E.E."/>
            <person name="Adams M.D."/>
            <person name="Hunkapiller M.W."/>
            <person name="Myers E.W."/>
            <person name="Venter J.C."/>
        </authorList>
    </citation>
    <scope>NUCLEOTIDE SEQUENCE [LARGE SCALE GENOMIC DNA]</scope>
</reference>
<reference key="4">
    <citation type="journal article" date="2004" name="Genome Res.">
        <title>The status, quality, and expansion of the NIH full-length cDNA project: the Mammalian Gene Collection (MGC).</title>
        <authorList>
            <consortium name="The MGC Project Team"/>
        </authorList>
    </citation>
    <scope>NUCLEOTIDE SEQUENCE [LARGE SCALE MRNA] (ISOFORMS 2; 4 AND 5)</scope>
    <source>
        <tissue>Placenta</tissue>
    </source>
</reference>
<reference key="5">
    <citation type="journal article" date="2006" name="Cell">
        <title>Global, in vivo, and site-specific phosphorylation dynamics in signaling networks.</title>
        <authorList>
            <person name="Olsen J.V."/>
            <person name="Blagoev B."/>
            <person name="Gnad F."/>
            <person name="Macek B."/>
            <person name="Kumar C."/>
            <person name="Mortensen P."/>
            <person name="Mann M."/>
        </authorList>
    </citation>
    <scope>PHOSPHORYLATION [LARGE SCALE ANALYSIS] AT SER-592</scope>
    <scope>IDENTIFICATION BY MASS SPECTROMETRY [LARGE SCALE ANALYSIS]</scope>
    <source>
        <tissue>Cervix carcinoma</tissue>
    </source>
</reference>
<reference key="6">
    <citation type="journal article" date="2008" name="J. Proteome Res.">
        <title>Combining protein-based IMAC, peptide-based IMAC, and MudPIT for efficient phosphoproteomic analysis.</title>
        <authorList>
            <person name="Cantin G.T."/>
            <person name="Yi W."/>
            <person name="Lu B."/>
            <person name="Park S.K."/>
            <person name="Xu T."/>
            <person name="Lee J.-D."/>
            <person name="Yates J.R. III"/>
        </authorList>
    </citation>
    <scope>PHOSPHORYLATION [LARGE SCALE ANALYSIS] AT SER-523</scope>
    <scope>IDENTIFICATION BY MASS SPECTROMETRY [LARGE SCALE ANALYSIS]</scope>
    <source>
        <tissue>Cervix carcinoma</tissue>
    </source>
</reference>
<reference key="7">
    <citation type="journal article" date="2008" name="Mol. Cell">
        <title>Kinase-selective enrichment enables quantitative phosphoproteomics of the kinome across the cell cycle.</title>
        <authorList>
            <person name="Daub H."/>
            <person name="Olsen J.V."/>
            <person name="Bairlein M."/>
            <person name="Gnad F."/>
            <person name="Oppermann F.S."/>
            <person name="Korner R."/>
            <person name="Greff Z."/>
            <person name="Keri G."/>
            <person name="Stemmann O."/>
            <person name="Mann M."/>
        </authorList>
    </citation>
    <scope>PHOSPHORYLATION [LARGE SCALE ANALYSIS] AT SER-592</scope>
    <scope>IDENTIFICATION BY MASS SPECTROMETRY [LARGE SCALE ANALYSIS]</scope>
    <source>
        <tissue>Cervix carcinoma</tissue>
    </source>
</reference>
<reference key="8">
    <citation type="journal article" date="2008" name="Proc. Natl. Acad. Sci. U.S.A.">
        <title>A quantitative atlas of mitotic phosphorylation.</title>
        <authorList>
            <person name="Dephoure N."/>
            <person name="Zhou C."/>
            <person name="Villen J."/>
            <person name="Beausoleil S.A."/>
            <person name="Bakalarski C.E."/>
            <person name="Elledge S.J."/>
            <person name="Gygi S.P."/>
        </authorList>
    </citation>
    <scope>PHOSPHORYLATION [LARGE SCALE ANALYSIS] AT THR-519; SER-520; SER-523; SER-536; SER-538 AND SER-546</scope>
    <scope>IDENTIFICATION BY MASS SPECTROMETRY [LARGE SCALE ANALYSIS]</scope>
    <source>
        <tissue>Cervix carcinoma</tissue>
    </source>
</reference>
<reference key="9">
    <citation type="journal article" date="2009" name="Sci. Signal.">
        <title>Quantitative phosphoproteomic analysis of T cell receptor signaling reveals system-wide modulation of protein-protein interactions.</title>
        <authorList>
            <person name="Mayya V."/>
            <person name="Lundgren D.H."/>
            <person name="Hwang S.-I."/>
            <person name="Rezaul K."/>
            <person name="Wu L."/>
            <person name="Eng J.K."/>
            <person name="Rodionov V."/>
            <person name="Han D.K."/>
        </authorList>
    </citation>
    <scope>PHOSPHORYLATION [LARGE SCALE ANALYSIS] AT SER-538 AND SER-546</scope>
    <scope>IDENTIFICATION BY MASS SPECTROMETRY [LARGE SCALE ANALYSIS]</scope>
    <source>
        <tissue>Leukemic T-cell</tissue>
    </source>
</reference>
<reference key="10">
    <citation type="journal article" date="2010" name="J. Biol. Chem.">
        <title>The connecdenn family, Rab35 guanine nucleotide exchange factors interfacing with the clathrin machinery.</title>
        <authorList>
            <person name="Marat A.L."/>
            <person name="McPherson P.S."/>
        </authorList>
    </citation>
    <scope>IDENTIFICATION (ISOFORM 1)</scope>
    <scope>SUBCELLULAR LOCATION</scope>
    <scope>FUNCTION</scope>
    <scope>INTERACTION WITH AP2A2; CLTC AND RAB35</scope>
</reference>
<reference key="11">
    <citation type="journal article" date="2010" name="J. Cell Biol.">
        <title>Family-wide characterization of the DENN domain Rab GDP-GTP exchange factors.</title>
        <authorList>
            <person name="Yoshimura S."/>
            <person name="Gerondopoulos A."/>
            <person name="Linford A."/>
            <person name="Rigden D.J."/>
            <person name="Barr F.A."/>
        </authorList>
    </citation>
    <scope>FUNCTION</scope>
    <scope>INTERACTION WITH CLATHRIN AND AP-2</scope>
    <scope>SUBCELLULAR LOCATION</scope>
</reference>
<reference key="12">
    <citation type="journal article" date="2010" name="Sci. Signal.">
        <title>Quantitative phosphoproteomics reveals widespread full phosphorylation site occupancy during mitosis.</title>
        <authorList>
            <person name="Olsen J.V."/>
            <person name="Vermeulen M."/>
            <person name="Santamaria A."/>
            <person name="Kumar C."/>
            <person name="Miller M.L."/>
            <person name="Jensen L.J."/>
            <person name="Gnad F."/>
            <person name="Cox J."/>
            <person name="Jensen T.S."/>
            <person name="Nigg E.A."/>
            <person name="Brunak S."/>
            <person name="Mann M."/>
        </authorList>
    </citation>
    <scope>PHOSPHORYLATION [LARGE SCALE ANALYSIS] AT SER-592</scope>
    <scope>IDENTIFICATION BY MASS SPECTROMETRY [LARGE SCALE ANALYSIS]</scope>
    <source>
        <tissue>Cervix carcinoma</tissue>
    </source>
</reference>
<reference key="13">
    <citation type="journal article" date="2011" name="Sci. Signal.">
        <title>System-wide temporal characterization of the proteome and phosphoproteome of human embryonic stem cell differentiation.</title>
        <authorList>
            <person name="Rigbolt K.T."/>
            <person name="Prokhorova T.A."/>
            <person name="Akimov V."/>
            <person name="Henningsen J."/>
            <person name="Johansen P.T."/>
            <person name="Kratchmarova I."/>
            <person name="Kassem M."/>
            <person name="Mann M."/>
            <person name="Olsen J.V."/>
            <person name="Blagoev B."/>
        </authorList>
    </citation>
    <scope>PHOSPHORYLATION [LARGE SCALE ANALYSIS] AT SER-520; SER-523 AND SER-592</scope>
    <scope>IDENTIFICATION BY MASS SPECTROMETRY [LARGE SCALE ANALYSIS]</scope>
</reference>
<reference key="14">
    <citation type="journal article" date="2012" name="J. Med. Genet.">
        <title>Replication of association of DENND1A and THADA variants with polycystic ovary syndrome in European cohorts.</title>
        <authorList>
            <person name="Goodarzi M.O."/>
            <person name="Jones M.R."/>
            <person name="Li X."/>
            <person name="Chua A.K."/>
            <person name="Garcia O.A."/>
            <person name="Chen Y.D."/>
            <person name="Krauss R.M."/>
            <person name="Rotter J.I."/>
            <person name="Ankener W."/>
            <person name="Legro R.S."/>
            <person name="Azziz R."/>
            <person name="Strauss J.F. III"/>
            <person name="Dunaif A."/>
            <person name="Urbanek M."/>
        </authorList>
    </citation>
    <scope>POSSIBLE INVOLVEMENT IN PCOS</scope>
</reference>
<reference key="15">
    <citation type="journal article" date="2013" name="Hum. Reprod.">
        <title>Genotype-phenotype correlations of PCOS susceptibility SNPs identified by GWAS in a large cohort of Han Chinese women.</title>
        <authorList>
            <person name="Cui L."/>
            <person name="Zhao H."/>
            <person name="Zhang B."/>
            <person name="Qu Z."/>
            <person name="Liu J."/>
            <person name="Liang X."/>
            <person name="Zhao X."/>
            <person name="Zhao J."/>
            <person name="Sun Y."/>
            <person name="Wang P."/>
            <person name="Li T."/>
            <person name="Shi Y."/>
            <person name="Chen Z.J."/>
        </authorList>
    </citation>
    <scope>POSSIBLE INVOLVEMENT IN PCOS</scope>
</reference>
<reference key="16">
    <citation type="journal article" date="2013" name="J. Proteome Res.">
        <title>Toward a comprehensive characterization of a human cancer cell phosphoproteome.</title>
        <authorList>
            <person name="Zhou H."/>
            <person name="Di Palma S."/>
            <person name="Preisinger C."/>
            <person name="Peng M."/>
            <person name="Polat A.N."/>
            <person name="Heck A.J."/>
            <person name="Mohammed S."/>
        </authorList>
    </citation>
    <scope>PHOSPHORYLATION [LARGE SCALE ANALYSIS] AT SER-473; SER-520; SER-523; SER-546 AND SER-592</scope>
    <scope>IDENTIFICATION BY MASS SPECTROMETRY [LARGE SCALE ANALYSIS]</scope>
    <source>
        <tissue>Cervix carcinoma</tissue>
        <tissue>Erythroleukemia</tissue>
    </source>
</reference>
<reference key="17">
    <citation type="journal article" date="2013" name="PLoS ONE">
        <title>Genetic alterations within the DENND1A gene in patients with polycystic ovary syndrome (PCOS).</title>
        <authorList>
            <person name="Eriksen M.B."/>
            <person name="Nielsen M.F."/>
            <person name="Brusgaard K."/>
            <person name="Tan Q."/>
            <person name="Andersen M.S."/>
            <person name="Glintborg D."/>
            <person name="Gaster M."/>
        </authorList>
    </citation>
    <scope>POSSIBLE INVOLVEMENT IN PCOS</scope>
</reference>
<reference key="18">
    <citation type="journal article" date="2014" name="J. Proteomics">
        <title>An enzyme assisted RP-RPLC approach for in-depth analysis of human liver phosphoproteome.</title>
        <authorList>
            <person name="Bian Y."/>
            <person name="Song C."/>
            <person name="Cheng K."/>
            <person name="Dong M."/>
            <person name="Wang F."/>
            <person name="Huang J."/>
            <person name="Sun D."/>
            <person name="Wang L."/>
            <person name="Ye M."/>
            <person name="Zou H."/>
        </authorList>
    </citation>
    <scope>PHOSPHORYLATION [LARGE SCALE ANALYSIS] AT SER-546 AND SER-749</scope>
    <scope>IDENTIFICATION BY MASS SPECTROMETRY [LARGE SCALE ANALYSIS]</scope>
    <source>
        <tissue>Liver</tissue>
    </source>
</reference>
<reference key="19">
    <citation type="journal article" date="2015" name="Gene">
        <title>DENND1A gene variants in Bahraini Arab women with polycystic ovary syndrome.</title>
        <authorList>
            <person name="Gammoh E."/>
            <person name="Arekat M.R."/>
            <person name="Saldhana F.L."/>
            <person name="Madan S."/>
            <person name="Ebrahim B.H."/>
            <person name="Almawi W.Y."/>
        </authorList>
    </citation>
    <scope>POSSIBLE INVOLVEMENT IN PCOS</scope>
</reference>
<reference key="20">
    <citation type="journal article" date="2015" name="J. Biol. Chem.">
        <title>Phosphorylation-dependent regulation of Connecdenn/DENND1 guanine nucleotide exchange factors.</title>
        <authorList>
            <person name="Kulasekaran G."/>
            <person name="Nossova N."/>
            <person name="Marat A.L."/>
            <person name="Lund I."/>
            <person name="Cremer C."/>
            <person name="Ioannou M.S."/>
            <person name="McPherson P.S."/>
        </authorList>
    </citation>
    <scope>ACTIVITY REGULATION</scope>
    <scope>INTERACTION WITH YWHAE</scope>
    <scope>PHOSPHORYLATION AT SER-536 AND SER-538</scope>
    <scope>MUTAGENESIS OF 536-SER--SER-538</scope>
</reference>
<feature type="chain" id="PRO_0000242680" description="DENN domain-containing protein 1A">
    <location>
        <begin position="1"/>
        <end position="1009"/>
    </location>
</feature>
<feature type="domain" description="uDENN" evidence="2">
    <location>
        <begin position="13"/>
        <end position="145"/>
    </location>
</feature>
<feature type="domain" description="cDENN" evidence="2">
    <location>
        <begin position="162"/>
        <end position="298"/>
    </location>
</feature>
<feature type="domain" description="dDENN" evidence="2">
    <location>
        <begin position="300"/>
        <end position="378"/>
    </location>
</feature>
<feature type="region of interest" description="Disordered" evidence="3">
    <location>
        <begin position="453"/>
        <end position="564"/>
    </location>
</feature>
<feature type="region of interest" description="Disordered" evidence="3">
    <location>
        <begin position="648"/>
        <end position="714"/>
    </location>
</feature>
<feature type="region of interest" description="Disordered" evidence="3">
    <location>
        <begin position="796"/>
        <end position="831"/>
    </location>
</feature>
<feature type="region of interest" description="Disordered" evidence="3">
    <location>
        <begin position="928"/>
        <end position="1009"/>
    </location>
</feature>
<feature type="short sequence motif" description="FXDXF motif" evidence="15">
    <location>
        <begin position="381"/>
        <end position="385"/>
    </location>
</feature>
<feature type="short sequence motif" description="Clathrin box" evidence="15">
    <location>
        <begin position="569"/>
        <end position="578"/>
    </location>
</feature>
<feature type="compositionally biased region" description="Basic and acidic residues" evidence="3">
    <location>
        <begin position="477"/>
        <end position="489"/>
    </location>
</feature>
<feature type="compositionally biased region" description="Basic residues" evidence="3">
    <location>
        <begin position="500"/>
        <end position="509"/>
    </location>
</feature>
<feature type="compositionally biased region" description="Pro residues" evidence="3">
    <location>
        <begin position="820"/>
        <end position="831"/>
    </location>
</feature>
<feature type="compositionally biased region" description="Pro residues" evidence="3">
    <location>
        <begin position="945"/>
        <end position="957"/>
    </location>
</feature>
<feature type="compositionally biased region" description="Basic and acidic residues" evidence="3">
    <location>
        <begin position="972"/>
        <end position="983"/>
    </location>
</feature>
<feature type="compositionally biased region" description="Low complexity" evidence="3">
    <location>
        <begin position="986"/>
        <end position="997"/>
    </location>
</feature>
<feature type="compositionally biased region" description="Basic and acidic residues" evidence="3">
    <location>
        <begin position="999"/>
        <end position="1009"/>
    </location>
</feature>
<feature type="modified residue" description="Phosphoserine" evidence="24">
    <location>
        <position position="473"/>
    </location>
</feature>
<feature type="modified residue" description="Phosphothreonine" evidence="19">
    <location>
        <position position="519"/>
    </location>
</feature>
<feature type="modified residue" description="Phosphoserine" evidence="19 23 24">
    <location>
        <position position="520"/>
    </location>
</feature>
<feature type="modified residue" description="Phosphoserine" evidence="18 19 23 24">
    <location>
        <position position="523"/>
    </location>
</feature>
<feature type="modified residue" description="Phosphoserine" evidence="10 19">
    <location>
        <position position="536"/>
    </location>
</feature>
<feature type="modified residue" description="Phosphoserine" evidence="10 19 21">
    <location>
        <position position="538"/>
    </location>
</feature>
<feature type="modified residue" description="Phosphoserine" evidence="19 21 24 25">
    <location>
        <position position="546"/>
    </location>
</feature>
<feature type="modified residue" description="Phosphoserine" evidence="17 20 22 23 24">
    <location>
        <position position="592"/>
    </location>
</feature>
<feature type="modified residue" description="Phosphoserine" evidence="25">
    <location>
        <position position="749"/>
    </location>
</feature>
<feature type="splice variant" id="VSP_034509" description="In isoform 4 and isoform 6." evidence="11 12">
    <location>
        <begin position="1"/>
        <end position="32"/>
    </location>
</feature>
<feature type="splice variant" id="VSP_034510" description="In isoform 5." evidence="12">
    <location>
        <begin position="1"/>
        <end position="30"/>
    </location>
</feature>
<feature type="splice variant" id="VSP_034511" description="In isoform 5." evidence="12">
    <original>PEVQRQFPEDYSD</original>
    <variation>MLKWPIPGQVALF</variation>
    <location>
        <begin position="31"/>
        <end position="43"/>
    </location>
</feature>
<feature type="splice variant" id="VSP_034512" description="In isoform 4." evidence="12">
    <original>VQRQFPEDYSDQEVLQTLTKFCFPFYVD</original>
    <variation>MLKWPIPGQVALFQILRCRGNSRRTTVT</variation>
    <location>
        <begin position="33"/>
        <end position="60"/>
    </location>
</feature>
<feature type="splice variant" id="VSP_040666" description="In isoform 6." evidence="11">
    <original>VQRQFPEDYS</original>
    <variation>MRRPGDHGLQ</variation>
    <location>
        <begin position="33"/>
        <end position="42"/>
    </location>
</feature>
<feature type="splice variant" id="VSP_040667" description="In isoform 7." evidence="11">
    <location>
        <begin position="290"/>
        <end position="331"/>
    </location>
</feature>
<feature type="splice variant" id="VSP_034513" description="In isoform 3 and isoform 4." evidence="12">
    <original>VR</original>
    <variation>AL</variation>
    <location>
        <begin position="497"/>
        <end position="498"/>
    </location>
</feature>
<feature type="splice variant" id="VSP_034514" description="In isoform 3 and isoform 4." evidence="12">
    <location>
        <begin position="499"/>
        <end position="1009"/>
    </location>
</feature>
<feature type="splice variant" id="VSP_040668" description="In isoform 6 and isoform 7." evidence="11">
    <original>Q</original>
    <variation>HLVKPLRHYAVFLSEDSSDDECQREEGPSSGFTESFFFSAPFEW</variation>
    <location>
        <position position="526"/>
    </location>
</feature>
<feature type="splice variant" id="VSP_019464" description="In isoform 2 and isoform 5." evidence="11 12">
    <original>PQPYRTLRESDSAEGDEAESPEQQVRKSTGPVP</original>
    <variation>NTIATPATLHILQKSITHFAAKFPTRGWTSSSH</variation>
    <location>
        <begin position="527"/>
        <end position="559"/>
    </location>
</feature>
<feature type="splice variant" id="VSP_019465" description="In isoform 2 and isoform 5." evidence="11 12">
    <location>
        <begin position="560"/>
        <end position="1009"/>
    </location>
</feature>
<feature type="mutagenesis site" description="Phosphomimetic mutant; abolishes the intramolecular interaction between the DENN domain and the C-terminus of the protein." evidence="10">
    <original>SDS</original>
    <variation>EDE</variation>
    <location>
        <begin position="536"/>
        <end position="538"/>
    </location>
</feature>
<feature type="sequence conflict" description="In Ref. 1; BAB15002." evidence="14" ref="1">
    <original>E</original>
    <variation>G</variation>
    <location>
        <position position="456"/>
    </location>
</feature>
<feature type="strand" evidence="26">
    <location>
        <begin position="10"/>
        <end position="12"/>
    </location>
</feature>
<feature type="strand" evidence="26">
    <location>
        <begin position="14"/>
        <end position="20"/>
    </location>
</feature>
<feature type="strand" evidence="26">
    <location>
        <begin position="32"/>
        <end position="38"/>
    </location>
</feature>
<feature type="helix" evidence="26">
    <location>
        <begin position="44"/>
        <end position="53"/>
    </location>
</feature>
<feature type="strand" evidence="26">
    <location>
        <begin position="69"/>
        <end position="76"/>
    </location>
</feature>
<feature type="strand" evidence="26">
    <location>
        <begin position="82"/>
        <end position="89"/>
    </location>
</feature>
<feature type="strand" evidence="26">
    <location>
        <begin position="93"/>
        <end position="103"/>
    </location>
</feature>
<feature type="helix" evidence="26">
    <location>
        <begin position="106"/>
        <end position="121"/>
    </location>
</feature>
<feature type="helix" evidence="26">
    <location>
        <begin position="125"/>
        <end position="137"/>
    </location>
</feature>
<feature type="strand" evidence="26">
    <location>
        <begin position="146"/>
        <end position="152"/>
    </location>
</feature>
<feature type="strand" evidence="26">
    <location>
        <begin position="154"/>
        <end position="156"/>
    </location>
</feature>
<feature type="helix" evidence="26">
    <location>
        <begin position="170"/>
        <end position="178"/>
    </location>
</feature>
<feature type="helix" evidence="26">
    <location>
        <begin position="181"/>
        <end position="192"/>
    </location>
</feature>
<feature type="strand" evidence="26">
    <location>
        <begin position="196"/>
        <end position="202"/>
    </location>
</feature>
<feature type="helix" evidence="26">
    <location>
        <begin position="204"/>
        <end position="216"/>
    </location>
</feature>
<feature type="turn" evidence="26">
    <location>
        <begin position="217"/>
        <end position="220"/>
    </location>
</feature>
<feature type="strand" evidence="26">
    <location>
        <begin position="225"/>
        <end position="230"/>
    </location>
</feature>
<feature type="helix" evidence="26">
    <location>
        <begin position="233"/>
        <end position="240"/>
    </location>
</feature>
<feature type="strand" evidence="26">
    <location>
        <begin position="245"/>
        <end position="250"/>
    </location>
</feature>
<feature type="helix" evidence="26">
    <location>
        <begin position="251"/>
        <end position="253"/>
    </location>
</feature>
<feature type="helix" evidence="26">
    <location>
        <begin position="254"/>
        <end position="259"/>
    </location>
</feature>
<feature type="strand" evidence="26">
    <location>
        <begin position="266"/>
        <end position="269"/>
    </location>
</feature>
<feature type="turn" evidence="26">
    <location>
        <begin position="270"/>
        <end position="273"/>
    </location>
</feature>
<feature type="strand" evidence="26">
    <location>
        <begin position="274"/>
        <end position="276"/>
    </location>
</feature>
<feature type="helix" evidence="26">
    <location>
        <begin position="281"/>
        <end position="284"/>
    </location>
</feature>
<feature type="helix" evidence="26">
    <location>
        <begin position="287"/>
        <end position="298"/>
    </location>
</feature>
<feature type="turn" evidence="26">
    <location>
        <begin position="301"/>
        <end position="303"/>
    </location>
</feature>
<feature type="helix" evidence="26">
    <location>
        <begin position="307"/>
        <end position="320"/>
    </location>
</feature>
<feature type="helix" evidence="26">
    <location>
        <begin position="321"/>
        <end position="326"/>
    </location>
</feature>
<feature type="strand" evidence="26">
    <location>
        <begin position="331"/>
        <end position="333"/>
    </location>
</feature>
<feature type="helix" evidence="26">
    <location>
        <begin position="339"/>
        <end position="343"/>
    </location>
</feature>
<feature type="helix" evidence="26">
    <location>
        <begin position="349"/>
        <end position="358"/>
    </location>
</feature>
<feature type="helix" evidence="26">
    <location>
        <begin position="362"/>
        <end position="377"/>
    </location>
</feature>
<feature type="helix" evidence="26">
    <location>
        <begin position="384"/>
        <end position="389"/>
    </location>
</feature>
<feature type="turn" evidence="26">
    <location>
        <begin position="391"/>
        <end position="393"/>
    </location>
</feature>
<accession>Q8TEH3</accession>
<accession>A8MZA3</accession>
<accession>B1AM80</accession>
<accession>B7Z3C8</accession>
<accession>B7Z669</accession>
<accession>D3PFD3</accession>
<accession>Q05C88</accession>
<accession>Q5VWF0</accession>
<accession>Q6PJZ5</accession>
<accession>Q8IVD6</accession>
<accession>Q9H796</accession>
<comment type="function">
    <text evidence="1 4 5">Guanine nucleotide exchange factor (GEF) regulating clathrin-mediated endocytosis through RAB35 activation. Promotes the exchange of GDP to GTP, converting inactive GDP-bound RAB35 into its active GTP-bound form. Regulates clathrin-mediated endocytosis of synaptic vesicles and mediates exit from early endosomes (PubMed:20154091, PubMed:20937701). Binds phosphatidylinositol-phosphates (PtdInsPs), with some preference for PtdIns(3)P (By similarity).</text>
</comment>
<comment type="activity regulation">
    <text evidence="10">The guanine nucleotide exchange factor (GEF) activity is autoinhibited. Autoinhibition may be the result of intramolecular interaction between the DENN domain and the C-terminus, which is disrupted upon phosphorylation. Activation is regulated by Akt activation.</text>
</comment>
<comment type="subunit">
    <text evidence="1 4 5 10">Interacts with RAB35 (PubMed:20154091). Interacts with clathrin and with the adapter protein complex 2, AP-2 (PubMed:20154091, PubMed:20937701). Interacts with ITSN1 and SH3GL2 (By similarity). Interacts (when phosphorylated) with YWHAE (PubMed:26055712).</text>
</comment>
<comment type="subcellular location">
    <subcellularLocation>
        <location evidence="4 5">Cytoplasmic vesicle</location>
        <location evidence="4 5">Clathrin-coated vesicle membrane</location>
        <topology evidence="5">Peripheral membrane protein</topology>
    </subcellularLocation>
    <subcellularLocation>
        <location evidence="5">Presynaptic cell membrane</location>
    </subcellularLocation>
    <text evidence="1">Associates to membranes via lipid-binding activity.</text>
</comment>
<comment type="alternative products">
    <event type="alternative splicing"/>
    <isoform>
        <id>Q8TEH3-1</id>
        <name>1</name>
        <sequence type="displayed"/>
    </isoform>
    <isoform>
        <id>Q8TEH3-2</id>
        <name>2</name>
        <sequence type="described" ref="VSP_019464 VSP_019465"/>
    </isoform>
    <isoform>
        <id>Q8TEH3-3</id>
        <name>3</name>
        <sequence type="described" ref="VSP_034513 VSP_034514"/>
    </isoform>
    <isoform>
        <id>Q8TEH3-4</id>
        <name>4</name>
        <sequence type="described" ref="VSP_034509 VSP_034512 VSP_034513 VSP_034514"/>
    </isoform>
    <isoform>
        <id>Q8TEH3-5</id>
        <name>5</name>
        <sequence type="described" ref="VSP_034510 VSP_034511 VSP_019464 VSP_019465"/>
    </isoform>
    <isoform>
        <id>Q8TEH3-6</id>
        <name>6</name>
        <sequence type="described" ref="VSP_034509 VSP_040666 VSP_040668"/>
    </isoform>
    <isoform>
        <id>Q8TEH3-7</id>
        <name>7</name>
        <sequence type="described" ref="VSP_040667 VSP_040668"/>
    </isoform>
</comment>
<comment type="PTM">
    <text evidence="10">Phosphorylated on serine and/or threonine in an Akt-dependent manner. Phosphorylation probably regulates the guanine nucleotide exchange factor (GEF) activity, possibly by disrupting an intramolecular interaction between the DENN domain and the C-terminus of the protein, thereby relieving the autoinhibition.</text>
</comment>
<comment type="disease">
    <text evidence="6 7 8 9">Genetic variants in DENND1A may play a role in susceptibility to polycystic ovary syndrome (PCOS), the most common endocrine disease among premenopausal women. PCOS is a complex disorder characterized by infertility, hirsutism, obesity, various menstrual disturbances, and enlarged ovaries studded with atretic follicles.</text>
</comment>
<comment type="sequence caution" evidence="14">
    <conflict type="erroneous initiation">
        <sequence resource="EMBL-CDS" id="AAH09616"/>
    </conflict>
    <text>Extended N-terminus.</text>
</comment>
<comment type="sequence caution" evidence="14">
    <conflict type="erroneous initiation">
        <sequence resource="EMBL-CDS" id="AAH28061"/>
    </conflict>
    <text>Extended N-terminus.</text>
</comment>
<comment type="sequence caution" evidence="14">
    <conflict type="erroneous initiation">
        <sequence resource="EMBL-CDS" id="BAH13155"/>
    </conflict>
    <text>Truncated N-terminus.</text>
</comment>
<dbReference type="EMBL" id="AK024782">
    <property type="protein sequence ID" value="BAB15002.1"/>
    <property type="molecule type" value="mRNA"/>
</dbReference>
<dbReference type="EMBL" id="AK074151">
    <property type="protein sequence ID" value="BAB84977.1"/>
    <property type="molecule type" value="mRNA"/>
</dbReference>
<dbReference type="EMBL" id="AK295710">
    <property type="protein sequence ID" value="BAH12164.1"/>
    <property type="molecule type" value="mRNA"/>
</dbReference>
<dbReference type="EMBL" id="AK299867">
    <property type="protein sequence ID" value="BAH13155.1"/>
    <property type="status" value="ALT_INIT"/>
    <property type="molecule type" value="mRNA"/>
</dbReference>
<dbReference type="EMBL" id="AC006450">
    <property type="status" value="NOT_ANNOTATED_CDS"/>
    <property type="molecule type" value="Genomic_DNA"/>
</dbReference>
<dbReference type="EMBL" id="AL161790">
    <property type="status" value="NOT_ANNOTATED_CDS"/>
    <property type="molecule type" value="Genomic_DNA"/>
</dbReference>
<dbReference type="EMBL" id="AL390774">
    <property type="status" value="NOT_ANNOTATED_CDS"/>
    <property type="molecule type" value="Genomic_DNA"/>
</dbReference>
<dbReference type="EMBL" id="AL445489">
    <property type="status" value="NOT_ANNOTATED_CDS"/>
    <property type="molecule type" value="Genomic_DNA"/>
</dbReference>
<dbReference type="EMBL" id="CH471090">
    <property type="protein sequence ID" value="EAW87571.1"/>
    <property type="molecule type" value="Genomic_DNA"/>
</dbReference>
<dbReference type="EMBL" id="CH471090">
    <property type="protein sequence ID" value="EAW87575.1"/>
    <property type="molecule type" value="Genomic_DNA"/>
</dbReference>
<dbReference type="EMBL" id="BC009616">
    <property type="protein sequence ID" value="AAH09616.1"/>
    <property type="status" value="ALT_INIT"/>
    <property type="molecule type" value="mRNA"/>
</dbReference>
<dbReference type="EMBL" id="BC028061">
    <property type="protein sequence ID" value="AAH28061.1"/>
    <property type="status" value="ALT_INIT"/>
    <property type="molecule type" value="mRNA"/>
</dbReference>
<dbReference type="EMBL" id="BC039703">
    <property type="protein sequence ID" value="AAH39703.1"/>
    <property type="molecule type" value="mRNA"/>
</dbReference>
<dbReference type="EMBL" id="BK006958">
    <property type="protein sequence ID" value="DAA12500.1"/>
    <property type="molecule type" value="mRNA"/>
</dbReference>
<dbReference type="CCDS" id="CCDS35133.1">
    <molecule id="Q8TEH3-1"/>
</dbReference>
<dbReference type="CCDS" id="CCDS35134.1">
    <molecule id="Q8TEH3-2"/>
</dbReference>
<dbReference type="CCDS" id="CCDS87687.1">
    <molecule id="Q8TEH3-4"/>
</dbReference>
<dbReference type="RefSeq" id="NP_001339894.1">
    <molecule id="Q8TEH3-6"/>
    <property type="nucleotide sequence ID" value="NM_001352965.2"/>
</dbReference>
<dbReference type="RefSeq" id="NP_001339895.1">
    <molecule id="Q8TEH3-5"/>
    <property type="nucleotide sequence ID" value="NM_001352966.2"/>
</dbReference>
<dbReference type="RefSeq" id="NP_001339897.1">
    <molecule id="Q8TEH3-4"/>
    <property type="nucleotide sequence ID" value="NM_001352968.2"/>
</dbReference>
<dbReference type="RefSeq" id="NP_065997.1">
    <molecule id="Q8TEH3-1"/>
    <property type="nucleotide sequence ID" value="NM_020946.2"/>
</dbReference>
<dbReference type="RefSeq" id="NP_079096.2">
    <molecule id="Q8TEH3-2"/>
    <property type="nucleotide sequence ID" value="NM_024820.2"/>
</dbReference>
<dbReference type="PDB" id="6EKK">
    <property type="method" value="X-ray"/>
    <property type="resolution" value="1.82 A"/>
    <property type="chains" value="A/B=2-394"/>
</dbReference>
<dbReference type="PDBsum" id="6EKK"/>
<dbReference type="SMR" id="Q8TEH3"/>
<dbReference type="BioGRID" id="121730">
    <property type="interactions" value="106"/>
</dbReference>
<dbReference type="FunCoup" id="Q8TEH3">
    <property type="interactions" value="1606"/>
</dbReference>
<dbReference type="IntAct" id="Q8TEH3">
    <property type="interactions" value="25"/>
</dbReference>
<dbReference type="MINT" id="Q8TEH3"/>
<dbReference type="STRING" id="9606.ENSP00000362727"/>
<dbReference type="GlyGen" id="Q8TEH3">
    <property type="glycosylation" value="2 sites"/>
</dbReference>
<dbReference type="iPTMnet" id="Q8TEH3"/>
<dbReference type="PhosphoSitePlus" id="Q8TEH3"/>
<dbReference type="BioMuta" id="DENND1A"/>
<dbReference type="DMDM" id="109825594"/>
<dbReference type="jPOST" id="Q8TEH3"/>
<dbReference type="MassIVE" id="Q8TEH3"/>
<dbReference type="PaxDb" id="9606-ENSP00000362727"/>
<dbReference type="PeptideAtlas" id="Q8TEH3"/>
<dbReference type="ProteomicsDB" id="74459">
    <molecule id="Q8TEH3-1"/>
</dbReference>
<dbReference type="ProteomicsDB" id="74460">
    <molecule id="Q8TEH3-2"/>
</dbReference>
<dbReference type="ProteomicsDB" id="74461">
    <molecule id="Q8TEH3-3"/>
</dbReference>
<dbReference type="ProteomicsDB" id="74462">
    <molecule id="Q8TEH3-4"/>
</dbReference>
<dbReference type="ProteomicsDB" id="74463">
    <molecule id="Q8TEH3-5"/>
</dbReference>
<dbReference type="ProteomicsDB" id="74464">
    <molecule id="Q8TEH3-6"/>
</dbReference>
<dbReference type="ProteomicsDB" id="74465">
    <molecule id="Q8TEH3-7"/>
</dbReference>
<dbReference type="Pumba" id="Q8TEH3"/>
<dbReference type="Antibodypedia" id="16262">
    <property type="antibodies" value="147 antibodies from 24 providers"/>
</dbReference>
<dbReference type="DNASU" id="57706"/>
<dbReference type="Ensembl" id="ENST00000373618.1">
    <molecule id="Q8TEH3-4"/>
    <property type="protein sequence ID" value="ENSP00000362720.1"/>
    <property type="gene ID" value="ENSG00000119522.18"/>
</dbReference>
<dbReference type="Ensembl" id="ENST00000373620.7">
    <molecule id="Q8TEH3-2"/>
    <property type="protein sequence ID" value="ENSP00000362722.3"/>
    <property type="gene ID" value="ENSG00000119522.18"/>
</dbReference>
<dbReference type="Ensembl" id="ENST00000373624.6">
    <molecule id="Q8TEH3-1"/>
    <property type="protein sequence ID" value="ENSP00000362727.2"/>
    <property type="gene ID" value="ENSG00000119522.18"/>
</dbReference>
<dbReference type="GeneID" id="57706"/>
<dbReference type="KEGG" id="hsa:57706"/>
<dbReference type="UCSC" id="uc004bnz.2">
    <molecule id="Q8TEH3-1"/>
    <property type="organism name" value="human"/>
</dbReference>
<dbReference type="AGR" id="HGNC:29324"/>
<dbReference type="CTD" id="57706"/>
<dbReference type="DisGeNET" id="57706"/>
<dbReference type="GeneCards" id="DENND1A"/>
<dbReference type="HGNC" id="HGNC:29324">
    <property type="gene designation" value="DENND1A"/>
</dbReference>
<dbReference type="HPA" id="ENSG00000119522">
    <property type="expression patterns" value="Low tissue specificity"/>
</dbReference>
<dbReference type="MIM" id="613633">
    <property type="type" value="gene"/>
</dbReference>
<dbReference type="neXtProt" id="NX_Q8TEH3"/>
<dbReference type="OpenTargets" id="ENSG00000119522"/>
<dbReference type="PharmGKB" id="PA134876117"/>
<dbReference type="VEuPathDB" id="HostDB:ENSG00000119522"/>
<dbReference type="eggNOG" id="KOG3569">
    <property type="taxonomic scope" value="Eukaryota"/>
</dbReference>
<dbReference type="GeneTree" id="ENSGT00940000156261"/>
<dbReference type="HOGENOM" id="CLU_008196_1_1_1"/>
<dbReference type="InParanoid" id="Q8TEH3"/>
<dbReference type="OMA" id="NTAWSGD"/>
<dbReference type="OrthoDB" id="206724at2759"/>
<dbReference type="PAN-GO" id="Q8TEH3">
    <property type="GO annotations" value="5 GO annotations based on evolutionary models"/>
</dbReference>
<dbReference type="PhylomeDB" id="Q8TEH3"/>
<dbReference type="TreeFam" id="TF343037"/>
<dbReference type="PathwayCommons" id="Q8TEH3"/>
<dbReference type="Reactome" id="R-HSA-8876198">
    <property type="pathway name" value="RAB GEFs exchange GTP for GDP on RABs"/>
</dbReference>
<dbReference type="SignaLink" id="Q8TEH3"/>
<dbReference type="BioGRID-ORCS" id="57706">
    <property type="hits" value="19 hits in 1158 CRISPR screens"/>
</dbReference>
<dbReference type="ChiTaRS" id="DENND1A">
    <property type="organism name" value="human"/>
</dbReference>
<dbReference type="GeneWiki" id="DENND1A"/>
<dbReference type="GenomeRNAi" id="57706"/>
<dbReference type="Pharos" id="Q8TEH3">
    <property type="development level" value="Tbio"/>
</dbReference>
<dbReference type="PRO" id="PR:Q8TEH3"/>
<dbReference type="Proteomes" id="UP000005640">
    <property type="component" value="Chromosome 9"/>
</dbReference>
<dbReference type="RNAct" id="Q8TEH3">
    <property type="molecule type" value="protein"/>
</dbReference>
<dbReference type="Bgee" id="ENSG00000119522">
    <property type="expression patterns" value="Expressed in monocyte and 144 other cell types or tissues"/>
</dbReference>
<dbReference type="ExpressionAtlas" id="Q8TEH3">
    <property type="expression patterns" value="baseline and differential"/>
</dbReference>
<dbReference type="GO" id="GO:0042995">
    <property type="term" value="C:cell projection"/>
    <property type="evidence" value="ECO:0007669"/>
    <property type="project" value="UniProtKB-KW"/>
</dbReference>
<dbReference type="GO" id="GO:0030136">
    <property type="term" value="C:clathrin-coated vesicle"/>
    <property type="evidence" value="ECO:0000314"/>
    <property type="project" value="UniProtKB"/>
</dbReference>
<dbReference type="GO" id="GO:0030665">
    <property type="term" value="C:clathrin-coated vesicle membrane"/>
    <property type="evidence" value="ECO:0000250"/>
    <property type="project" value="UniProtKB"/>
</dbReference>
<dbReference type="GO" id="GO:0005829">
    <property type="term" value="C:cytosol"/>
    <property type="evidence" value="ECO:0000314"/>
    <property type="project" value="HPA"/>
</dbReference>
<dbReference type="GO" id="GO:0043231">
    <property type="term" value="C:intracellular membrane-bounded organelle"/>
    <property type="evidence" value="ECO:0000314"/>
    <property type="project" value="HPA"/>
</dbReference>
<dbReference type="GO" id="GO:0042734">
    <property type="term" value="C:presynaptic membrane"/>
    <property type="evidence" value="ECO:0007669"/>
    <property type="project" value="UniProtKB-SubCell"/>
</dbReference>
<dbReference type="GO" id="GO:0005085">
    <property type="term" value="F:guanyl-nucleotide exchange factor activity"/>
    <property type="evidence" value="ECO:0000314"/>
    <property type="project" value="UniProtKB"/>
</dbReference>
<dbReference type="GO" id="GO:1901981">
    <property type="term" value="F:phosphatidylinositol phosphate binding"/>
    <property type="evidence" value="ECO:0000250"/>
    <property type="project" value="UniProtKB"/>
</dbReference>
<dbReference type="GO" id="GO:0032266">
    <property type="term" value="F:phosphatidylinositol-3-phosphate binding"/>
    <property type="evidence" value="ECO:0000250"/>
    <property type="project" value="UniProtKB"/>
</dbReference>
<dbReference type="GO" id="GO:0032456">
    <property type="term" value="P:endocytic recycling"/>
    <property type="evidence" value="ECO:0000250"/>
    <property type="project" value="UniProtKB"/>
</dbReference>
<dbReference type="GO" id="GO:0006897">
    <property type="term" value="P:endocytosis"/>
    <property type="evidence" value="ECO:0000315"/>
    <property type="project" value="UniProtKB"/>
</dbReference>
<dbReference type="GO" id="GO:0015031">
    <property type="term" value="P:protein transport"/>
    <property type="evidence" value="ECO:0007669"/>
    <property type="project" value="UniProtKB-KW"/>
</dbReference>
<dbReference type="GO" id="GO:0032483">
    <property type="term" value="P:regulation of Rab protein signal transduction"/>
    <property type="evidence" value="ECO:0000314"/>
    <property type="project" value="FlyBase"/>
</dbReference>
<dbReference type="FunFam" id="3.30.450.200:FF:000003">
    <property type="entry name" value="DENN domain containing 1A"/>
    <property type="match status" value="1"/>
</dbReference>
<dbReference type="FunFam" id="3.40.50.11500:FF:000001">
    <property type="entry name" value="Putative DENN domain-containing protein 1A"/>
    <property type="match status" value="1"/>
</dbReference>
<dbReference type="Gene3D" id="3.30.450.200">
    <property type="match status" value="1"/>
</dbReference>
<dbReference type="Gene3D" id="3.40.50.11500">
    <property type="match status" value="1"/>
</dbReference>
<dbReference type="Gene3D" id="6.10.140.1000">
    <property type="match status" value="1"/>
</dbReference>
<dbReference type="InterPro" id="IPR001194">
    <property type="entry name" value="cDENN_dom"/>
</dbReference>
<dbReference type="InterPro" id="IPR005112">
    <property type="entry name" value="dDENN_dom"/>
</dbReference>
<dbReference type="InterPro" id="IPR043153">
    <property type="entry name" value="DENN_C"/>
</dbReference>
<dbReference type="InterPro" id="IPR040032">
    <property type="entry name" value="DENND1A/B/C"/>
</dbReference>
<dbReference type="InterPro" id="IPR037516">
    <property type="entry name" value="Tripartite_DENN"/>
</dbReference>
<dbReference type="InterPro" id="IPR005113">
    <property type="entry name" value="uDENN_dom"/>
</dbReference>
<dbReference type="PANTHER" id="PTHR13196">
    <property type="entry name" value="DENN DOMAIN-CONTAINING"/>
    <property type="match status" value="1"/>
</dbReference>
<dbReference type="PANTHER" id="PTHR13196:SF22">
    <property type="entry name" value="DENN DOMAIN-CONTAINING PROTEIN 1A"/>
    <property type="match status" value="1"/>
</dbReference>
<dbReference type="Pfam" id="PF03455">
    <property type="entry name" value="dDENN"/>
    <property type="match status" value="1"/>
</dbReference>
<dbReference type="Pfam" id="PF02141">
    <property type="entry name" value="DENN"/>
    <property type="match status" value="1"/>
</dbReference>
<dbReference type="Pfam" id="PF03456">
    <property type="entry name" value="uDENN"/>
    <property type="match status" value="1"/>
</dbReference>
<dbReference type="SMART" id="SM00801">
    <property type="entry name" value="dDENN"/>
    <property type="match status" value="1"/>
</dbReference>
<dbReference type="SMART" id="SM00799">
    <property type="entry name" value="DENN"/>
    <property type="match status" value="1"/>
</dbReference>
<dbReference type="SMART" id="SM00800">
    <property type="entry name" value="uDENN"/>
    <property type="match status" value="1"/>
</dbReference>
<dbReference type="PROSITE" id="PS50211">
    <property type="entry name" value="DENN"/>
    <property type="match status" value="1"/>
</dbReference>
<evidence type="ECO:0000250" key="1">
    <source>
        <dbReference type="UniProtKB" id="Q8K382"/>
    </source>
</evidence>
<evidence type="ECO:0000255" key="2">
    <source>
        <dbReference type="PROSITE-ProRule" id="PRU00304"/>
    </source>
</evidence>
<evidence type="ECO:0000256" key="3">
    <source>
        <dbReference type="SAM" id="MobiDB-lite"/>
    </source>
</evidence>
<evidence type="ECO:0000269" key="4">
    <source>
    </source>
</evidence>
<evidence type="ECO:0000269" key="5">
    <source>
    </source>
</evidence>
<evidence type="ECO:0000269" key="6">
    <source>
    </source>
</evidence>
<evidence type="ECO:0000269" key="7">
    <source>
    </source>
</evidence>
<evidence type="ECO:0000269" key="8">
    <source>
    </source>
</evidence>
<evidence type="ECO:0000269" key="9">
    <source>
    </source>
</evidence>
<evidence type="ECO:0000269" key="10">
    <source>
    </source>
</evidence>
<evidence type="ECO:0000303" key="11">
    <source>
    </source>
</evidence>
<evidence type="ECO:0000303" key="12">
    <source>
    </source>
</evidence>
<evidence type="ECO:0000303" key="13">
    <source>
    </source>
</evidence>
<evidence type="ECO:0000305" key="14"/>
<evidence type="ECO:0000305" key="15">
    <source>
    </source>
</evidence>
<evidence type="ECO:0000312" key="16">
    <source>
        <dbReference type="HGNC" id="HGNC:29324"/>
    </source>
</evidence>
<evidence type="ECO:0007744" key="17">
    <source>
    </source>
</evidence>
<evidence type="ECO:0007744" key="18">
    <source>
    </source>
</evidence>
<evidence type="ECO:0007744" key="19">
    <source>
    </source>
</evidence>
<evidence type="ECO:0007744" key="20">
    <source>
    </source>
</evidence>
<evidence type="ECO:0007744" key="21">
    <source>
    </source>
</evidence>
<evidence type="ECO:0007744" key="22">
    <source>
    </source>
</evidence>
<evidence type="ECO:0007744" key="23">
    <source>
    </source>
</evidence>
<evidence type="ECO:0007744" key="24">
    <source>
    </source>
</evidence>
<evidence type="ECO:0007744" key="25">
    <source>
    </source>
</evidence>
<evidence type="ECO:0007829" key="26">
    <source>
        <dbReference type="PDB" id="6EKK"/>
    </source>
</evidence>
<sequence length="1009" mass="110577">MGSRIKQNPETTFEVYVEVAYPRTGGTLSDPEVQRQFPEDYSDQEVLQTLTKFCFPFYVDSLTVSQVGQNFTFVLTDIDSKQRFGFCRLSSGAKSCFCILSYLPWFEVFYKLLNILADYTTKRQENQWNELLETLHKLPIPDPGVSVHLSVHSYFTVPDTRELPSIPENRNLTEYFVAVDVNNMLHLYASMLYERRILIICSKLSTLTACIHGSAAMLYPMYWQHVYIPVLPPHLLDYCCAPMPYLIGIHLSLMEKVRNMALDDVVILNVDTNTLETPFDDLQSLPNDVISSLKNRLKKVSTTTGDGVARAFLKAQAAFFGSYRNALKIEPEEPITFCEEAFVSHYRSGAMRQFLQNATQLQLFKQFIDGRLDLLNSGEGFSDVFEEEINMGEYAGSDKLYHQWLSTVRKGSGAILNTVKTKANPAMKTVYKFAKDHAKMGIKEVKNRLKQKDIAENGCAPTPEEQLPKTAPSPLVEAKDPKLREDRRPITVHFGQVRPPRPHVVKRPKSNIAVEGRRTSVPSPEQPQPYRTLRESDSAEGDEAESPEQQVRKSTGPVPAPPDRAASIDLLEDVFSNLDMEAALQPLGQAKSLEDLRAPKDLREQPGTFDYQRLDLGGSERSRGVTVALKLTHPYNKLWSLGQDDMAIPSKPPAASPEKPSALLGNSLALPRRPQNRDSILNPSDKEEVPTPTLGSITIPRPQGRKTPELGIVPPPPIPRPAKLQAAGAALGDVSERLQTDRDRRAALSPGLLPGVVPQGPTELLQPLSPGPGAAGTSSDALLALLDPLSTAWSGSTLPSRPATPNVATPFTPQFSFPPAGTPTPFPQPPLNPFVPSMPAAPPTLPLVSTPAGPFGAPPASLGPAFASGLLLSSAGFCAPHRSQPNLSALSMPNLFGQMPMGTHTSPLQPLGPPAVAPSRIRTLPLARSSARAAETKQGLALRPGDPPLLPPRPPQGLEPTLQPSAPQQARDPFEDLLQKTKQDVSPSPALAPAPDSVEQLRKQWETFE</sequence>
<proteinExistence type="evidence at protein level"/>
<keyword id="KW-0002">3D-structure</keyword>
<keyword id="KW-0025">Alternative splicing</keyword>
<keyword id="KW-1003">Cell membrane</keyword>
<keyword id="KW-0966">Cell projection</keyword>
<keyword id="KW-0968">Cytoplasmic vesicle</keyword>
<keyword id="KW-0344">Guanine-nucleotide releasing factor</keyword>
<keyword id="KW-0446">Lipid-binding</keyword>
<keyword id="KW-0472">Membrane</keyword>
<keyword id="KW-0597">Phosphoprotein</keyword>
<keyword id="KW-0653">Protein transport</keyword>
<keyword id="KW-1267">Proteomics identification</keyword>
<keyword id="KW-1185">Reference proteome</keyword>
<keyword id="KW-0770">Synapse</keyword>
<keyword id="KW-0813">Transport</keyword>
<organism>
    <name type="scientific">Homo sapiens</name>
    <name type="common">Human</name>
    <dbReference type="NCBI Taxonomy" id="9606"/>
    <lineage>
        <taxon>Eukaryota</taxon>
        <taxon>Metazoa</taxon>
        <taxon>Chordata</taxon>
        <taxon>Craniata</taxon>
        <taxon>Vertebrata</taxon>
        <taxon>Euteleostomi</taxon>
        <taxon>Mammalia</taxon>
        <taxon>Eutheria</taxon>
        <taxon>Euarchontoglires</taxon>
        <taxon>Primates</taxon>
        <taxon>Haplorrhini</taxon>
        <taxon>Catarrhini</taxon>
        <taxon>Hominidae</taxon>
        <taxon>Homo</taxon>
    </lineage>
</organism>
<protein>
    <recommendedName>
        <fullName evidence="16">DENN domain-containing protein 1A</fullName>
    </recommendedName>
    <alternativeName>
        <fullName evidence="13">Connecdenn 1</fullName>
        <shortName evidence="13">Connecdenn</shortName>
    </alternativeName>
    <alternativeName>
        <fullName>Protein FAM31A</fullName>
    </alternativeName>
</protein>
<gene>
    <name evidence="16" type="primary">DENND1A</name>
    <name evidence="16" type="synonym">FAM31A</name>
    <name type="synonym">KIAA1608</name>
</gene>